<gene>
    <name evidence="1" type="primary">obg</name>
    <name type="ordered locus">YPN_3253</name>
    <name type="ORF">YP516_3696</name>
</gene>
<dbReference type="EC" id="3.6.5.-" evidence="1"/>
<dbReference type="EMBL" id="CP000305">
    <property type="protein sequence ID" value="ABG19580.1"/>
    <property type="molecule type" value="Genomic_DNA"/>
</dbReference>
<dbReference type="EMBL" id="ACNQ01000017">
    <property type="protein sequence ID" value="EEO75761.1"/>
    <property type="molecule type" value="Genomic_DNA"/>
</dbReference>
<dbReference type="SMR" id="Q1CEK0"/>
<dbReference type="KEGG" id="ypn:YPN_3253"/>
<dbReference type="HOGENOM" id="CLU_011747_2_0_6"/>
<dbReference type="Proteomes" id="UP000008936">
    <property type="component" value="Chromosome"/>
</dbReference>
<dbReference type="GO" id="GO:0005737">
    <property type="term" value="C:cytoplasm"/>
    <property type="evidence" value="ECO:0007669"/>
    <property type="project" value="UniProtKB-SubCell"/>
</dbReference>
<dbReference type="GO" id="GO:0005525">
    <property type="term" value="F:GTP binding"/>
    <property type="evidence" value="ECO:0007669"/>
    <property type="project" value="UniProtKB-UniRule"/>
</dbReference>
<dbReference type="GO" id="GO:0003924">
    <property type="term" value="F:GTPase activity"/>
    <property type="evidence" value="ECO:0007669"/>
    <property type="project" value="UniProtKB-UniRule"/>
</dbReference>
<dbReference type="GO" id="GO:0000287">
    <property type="term" value="F:magnesium ion binding"/>
    <property type="evidence" value="ECO:0007669"/>
    <property type="project" value="InterPro"/>
</dbReference>
<dbReference type="GO" id="GO:0042254">
    <property type="term" value="P:ribosome biogenesis"/>
    <property type="evidence" value="ECO:0007669"/>
    <property type="project" value="UniProtKB-UniRule"/>
</dbReference>
<dbReference type="CDD" id="cd01898">
    <property type="entry name" value="Obg"/>
    <property type="match status" value="1"/>
</dbReference>
<dbReference type="FunFam" id="2.70.210.12:FF:000001">
    <property type="entry name" value="GTPase Obg"/>
    <property type="match status" value="1"/>
</dbReference>
<dbReference type="FunFam" id="3.40.50.300:FF:000185">
    <property type="entry name" value="GTPase Obg"/>
    <property type="match status" value="1"/>
</dbReference>
<dbReference type="Gene3D" id="2.70.210.12">
    <property type="entry name" value="GTP1/OBG domain"/>
    <property type="match status" value="1"/>
</dbReference>
<dbReference type="Gene3D" id="3.40.50.300">
    <property type="entry name" value="P-loop containing nucleotide triphosphate hydrolases"/>
    <property type="match status" value="1"/>
</dbReference>
<dbReference type="HAMAP" id="MF_01454">
    <property type="entry name" value="GTPase_Obg"/>
    <property type="match status" value="1"/>
</dbReference>
<dbReference type="InterPro" id="IPR031167">
    <property type="entry name" value="G_OBG"/>
</dbReference>
<dbReference type="InterPro" id="IPR006073">
    <property type="entry name" value="GTP-bd"/>
</dbReference>
<dbReference type="InterPro" id="IPR014100">
    <property type="entry name" value="GTP-bd_Obg/CgtA"/>
</dbReference>
<dbReference type="InterPro" id="IPR006074">
    <property type="entry name" value="GTP1-OBG_CS"/>
</dbReference>
<dbReference type="InterPro" id="IPR006169">
    <property type="entry name" value="GTP1_OBG_dom"/>
</dbReference>
<dbReference type="InterPro" id="IPR036726">
    <property type="entry name" value="GTP1_OBG_dom_sf"/>
</dbReference>
<dbReference type="InterPro" id="IPR045086">
    <property type="entry name" value="OBG_GTPase"/>
</dbReference>
<dbReference type="InterPro" id="IPR027417">
    <property type="entry name" value="P-loop_NTPase"/>
</dbReference>
<dbReference type="NCBIfam" id="TIGR02729">
    <property type="entry name" value="Obg_CgtA"/>
    <property type="match status" value="1"/>
</dbReference>
<dbReference type="NCBIfam" id="NF008955">
    <property type="entry name" value="PRK12297.1"/>
    <property type="match status" value="1"/>
</dbReference>
<dbReference type="NCBIfam" id="NF008956">
    <property type="entry name" value="PRK12299.1"/>
    <property type="match status" value="1"/>
</dbReference>
<dbReference type="PANTHER" id="PTHR11702">
    <property type="entry name" value="DEVELOPMENTALLY REGULATED GTP-BINDING PROTEIN-RELATED"/>
    <property type="match status" value="1"/>
</dbReference>
<dbReference type="PANTHER" id="PTHR11702:SF31">
    <property type="entry name" value="MITOCHONDRIAL RIBOSOME-ASSOCIATED GTPASE 2"/>
    <property type="match status" value="1"/>
</dbReference>
<dbReference type="Pfam" id="PF01018">
    <property type="entry name" value="GTP1_OBG"/>
    <property type="match status" value="1"/>
</dbReference>
<dbReference type="Pfam" id="PF01926">
    <property type="entry name" value="MMR_HSR1"/>
    <property type="match status" value="1"/>
</dbReference>
<dbReference type="PIRSF" id="PIRSF002401">
    <property type="entry name" value="GTP_bd_Obg/CgtA"/>
    <property type="match status" value="1"/>
</dbReference>
<dbReference type="PRINTS" id="PR00326">
    <property type="entry name" value="GTP1OBG"/>
</dbReference>
<dbReference type="SUPFAM" id="SSF82051">
    <property type="entry name" value="Obg GTP-binding protein N-terminal domain"/>
    <property type="match status" value="1"/>
</dbReference>
<dbReference type="SUPFAM" id="SSF52540">
    <property type="entry name" value="P-loop containing nucleoside triphosphate hydrolases"/>
    <property type="match status" value="1"/>
</dbReference>
<dbReference type="PROSITE" id="PS51710">
    <property type="entry name" value="G_OBG"/>
    <property type="match status" value="1"/>
</dbReference>
<dbReference type="PROSITE" id="PS00905">
    <property type="entry name" value="GTP1_OBG"/>
    <property type="match status" value="1"/>
</dbReference>
<dbReference type="PROSITE" id="PS51883">
    <property type="entry name" value="OBG"/>
    <property type="match status" value="1"/>
</dbReference>
<proteinExistence type="inferred from homology"/>
<comment type="function">
    <text evidence="1">An essential GTPase which binds GTP, GDP and possibly (p)ppGpp with moderate affinity, with high nucleotide exchange rates and a fairly low GTP hydrolysis rate. Plays a role in control of the cell cycle, stress response, ribosome biogenesis and in those bacteria that undergo differentiation, in morphogenesis control.</text>
</comment>
<comment type="cofactor">
    <cofactor evidence="1">
        <name>Mg(2+)</name>
        <dbReference type="ChEBI" id="CHEBI:18420"/>
    </cofactor>
</comment>
<comment type="subunit">
    <text evidence="1">Monomer.</text>
</comment>
<comment type="subcellular location">
    <subcellularLocation>
        <location evidence="1">Cytoplasm</location>
    </subcellularLocation>
</comment>
<comment type="similarity">
    <text evidence="1">Belongs to the TRAFAC class OBG-HflX-like GTPase superfamily. OBG GTPase family.</text>
</comment>
<feature type="chain" id="PRO_0000386410" description="GTPase Obg">
    <location>
        <begin position="1"/>
        <end position="390"/>
    </location>
</feature>
<feature type="domain" description="Obg" evidence="2">
    <location>
        <begin position="1"/>
        <end position="159"/>
    </location>
</feature>
<feature type="domain" description="OBG-type G" evidence="1">
    <location>
        <begin position="160"/>
        <end position="333"/>
    </location>
</feature>
<feature type="region of interest" description="Disordered" evidence="3">
    <location>
        <begin position="364"/>
        <end position="390"/>
    </location>
</feature>
<feature type="compositionally biased region" description="Acidic residues" evidence="3">
    <location>
        <begin position="364"/>
        <end position="384"/>
    </location>
</feature>
<feature type="binding site" evidence="1">
    <location>
        <begin position="166"/>
        <end position="173"/>
    </location>
    <ligand>
        <name>GTP</name>
        <dbReference type="ChEBI" id="CHEBI:37565"/>
    </ligand>
</feature>
<feature type="binding site" evidence="1">
    <location>
        <position position="173"/>
    </location>
    <ligand>
        <name>Mg(2+)</name>
        <dbReference type="ChEBI" id="CHEBI:18420"/>
    </ligand>
</feature>
<feature type="binding site" evidence="1">
    <location>
        <begin position="191"/>
        <end position="195"/>
    </location>
    <ligand>
        <name>GTP</name>
        <dbReference type="ChEBI" id="CHEBI:37565"/>
    </ligand>
</feature>
<feature type="binding site" evidence="1">
    <location>
        <position position="193"/>
    </location>
    <ligand>
        <name>Mg(2+)</name>
        <dbReference type="ChEBI" id="CHEBI:18420"/>
    </ligand>
</feature>
<feature type="binding site" evidence="1">
    <location>
        <begin position="213"/>
        <end position="216"/>
    </location>
    <ligand>
        <name>GTP</name>
        <dbReference type="ChEBI" id="CHEBI:37565"/>
    </ligand>
</feature>
<feature type="binding site" evidence="1">
    <location>
        <begin position="283"/>
        <end position="286"/>
    </location>
    <ligand>
        <name>GTP</name>
        <dbReference type="ChEBI" id="CHEBI:37565"/>
    </ligand>
</feature>
<feature type="binding site" evidence="1">
    <location>
        <begin position="314"/>
        <end position="316"/>
    </location>
    <ligand>
        <name>GTP</name>
        <dbReference type="ChEBI" id="CHEBI:37565"/>
    </ligand>
</feature>
<protein>
    <recommendedName>
        <fullName evidence="1">GTPase Obg</fullName>
        <ecNumber evidence="1">3.6.5.-</ecNumber>
    </recommendedName>
    <alternativeName>
        <fullName evidence="1">GTP-binding protein Obg</fullName>
    </alternativeName>
</protein>
<sequence length="390" mass="43148">MKFVDEAAILVVAGDGGNGCVSFRREKYIPNGGPDGGDGGDGGDIYLLADENLNTLIDYRFVKSFRAERGQNGQSRDCTGKRGKDITIKVPVGTRVLDQGTGEIVGDMVRHGQRLMVAKGGFHGLGNSRFKSSVNRAPRQKTMGTEGETRELMLELLLLADVGMLGLPNAGKSTFIRAVSAAKPKVADYPFTTLIPSLGVVRMDYEQSFVIADIPGLIEGASDGAGLGIRFLKHLERCRVLLHLVDLAPIDESDPAENAKVIVNELQQYSENLAEKPRWLVFNKIDLIDPEEAEKRAKAIVETLGWEGKYYMISAANRDNVNALCWDVMSFLNSQPKAMAIAESVPEKVEFMWDDYHREQLAEVEAEAEDDWDDDWDEEDDDGVEIIYER</sequence>
<accession>Q1CEK0</accession>
<name>OBG_YERPN</name>
<evidence type="ECO:0000255" key="1">
    <source>
        <dbReference type="HAMAP-Rule" id="MF_01454"/>
    </source>
</evidence>
<evidence type="ECO:0000255" key="2">
    <source>
        <dbReference type="PROSITE-ProRule" id="PRU01231"/>
    </source>
</evidence>
<evidence type="ECO:0000256" key="3">
    <source>
        <dbReference type="SAM" id="MobiDB-lite"/>
    </source>
</evidence>
<reference key="1">
    <citation type="journal article" date="2006" name="J. Bacteriol.">
        <title>Complete genome sequence of Yersinia pestis strains Antiqua and Nepal516: evidence of gene reduction in an emerging pathogen.</title>
        <authorList>
            <person name="Chain P.S.G."/>
            <person name="Hu P."/>
            <person name="Malfatti S.A."/>
            <person name="Radnedge L."/>
            <person name="Larimer F."/>
            <person name="Vergez L.M."/>
            <person name="Worsham P."/>
            <person name="Chu M.C."/>
            <person name="Andersen G.L."/>
        </authorList>
    </citation>
    <scope>NUCLEOTIDE SEQUENCE [LARGE SCALE GENOMIC DNA]</scope>
    <source>
        <strain>Nepal516</strain>
    </source>
</reference>
<reference key="2">
    <citation type="submission" date="2009-04" db="EMBL/GenBank/DDBJ databases">
        <title>Yersinia pestis Nepal516A whole genome shotgun sequencing project.</title>
        <authorList>
            <person name="Plunkett G. III"/>
            <person name="Anderson B.D."/>
            <person name="Baumler D.J."/>
            <person name="Burland V."/>
            <person name="Cabot E.L."/>
            <person name="Glasner J.D."/>
            <person name="Mau B."/>
            <person name="Neeno-Eckwall E."/>
            <person name="Perna N.T."/>
            <person name="Munk A.C."/>
            <person name="Tapia R."/>
            <person name="Green L.D."/>
            <person name="Rogers Y.C."/>
            <person name="Detter J.C."/>
            <person name="Bruce D.C."/>
            <person name="Brettin T.S."/>
        </authorList>
    </citation>
    <scope>NUCLEOTIDE SEQUENCE [LARGE SCALE GENOMIC DNA]</scope>
    <source>
        <strain>Nepal516</strain>
    </source>
</reference>
<organism>
    <name type="scientific">Yersinia pestis bv. Antiqua (strain Nepal516)</name>
    <dbReference type="NCBI Taxonomy" id="377628"/>
    <lineage>
        <taxon>Bacteria</taxon>
        <taxon>Pseudomonadati</taxon>
        <taxon>Pseudomonadota</taxon>
        <taxon>Gammaproteobacteria</taxon>
        <taxon>Enterobacterales</taxon>
        <taxon>Yersiniaceae</taxon>
        <taxon>Yersinia</taxon>
    </lineage>
</organism>
<keyword id="KW-0963">Cytoplasm</keyword>
<keyword id="KW-0342">GTP-binding</keyword>
<keyword id="KW-0378">Hydrolase</keyword>
<keyword id="KW-0460">Magnesium</keyword>
<keyword id="KW-0479">Metal-binding</keyword>
<keyword id="KW-0547">Nucleotide-binding</keyword>